<keyword id="KW-1064">Adaptive immunity</keyword>
<keyword id="KW-1003">Cell membrane</keyword>
<keyword id="KW-1015">Disulfide bond</keyword>
<keyword id="KW-0325">Glycoprotein</keyword>
<keyword id="KW-0391">Immunity</keyword>
<keyword id="KW-0472">Membrane</keyword>
<keyword id="KW-0597">Phosphoprotein</keyword>
<keyword id="KW-1185">Reference proteome</keyword>
<keyword id="KW-0735">Signal-anchor</keyword>
<keyword id="KW-0812">Transmembrane</keyword>
<keyword id="KW-1133">Transmembrane helix</keyword>
<reference key="1">
    <citation type="journal article" date="2004" name="Genome Res.">
        <title>The status, quality, and expansion of the NIH full-length cDNA project: the Mammalian Gene Collection (MGC).</title>
        <authorList>
            <consortium name="The MGC Project Team"/>
        </authorList>
    </citation>
    <scope>NUCLEOTIDE SEQUENCE [LARGE SCALE MRNA]</scope>
    <source>
        <tissue>Spleen</tissue>
    </source>
</reference>
<reference key="2">
    <citation type="journal article" date="2006" name="Blood">
        <title>Transmembrane adaptor molecules: a new category of lymphoid-cell markers.</title>
        <authorList>
            <person name="Tedoldi S."/>
            <person name="Paterson J.C."/>
            <person name="Hansmann M.-L."/>
            <person name="Natkunam Y."/>
            <person name="Rudiger T."/>
            <person name="Angelisova P."/>
            <person name="Du M.Q."/>
            <person name="Roberton H."/>
            <person name="Roncador G."/>
            <person name="Sanchez L."/>
            <person name="Pozzobon M."/>
            <person name="Masir N."/>
            <person name="Barry R."/>
            <person name="Pileri S."/>
            <person name="Mason D.Y."/>
            <person name="Marafioti T."/>
            <person name="Horejsi V."/>
        </authorList>
    </citation>
    <scope>TISSUE SPECIFICITY</scope>
</reference>
<reference key="3">
    <citation type="journal article" date="2012" name="Nat. Commun.">
        <title>Quantitative maps of protein phosphorylation sites across 14 different rat organs and tissues.</title>
        <authorList>
            <person name="Lundby A."/>
            <person name="Secher A."/>
            <person name="Lage K."/>
            <person name="Nordsborg N.B."/>
            <person name="Dmytriyev A."/>
            <person name="Lundby C."/>
            <person name="Olsen J.V."/>
        </authorList>
    </citation>
    <scope>PHOSPHORYLATION [LARGE SCALE ANALYSIS] AT SER-65; SER-87; SER-89 AND SER-164</scope>
    <scope>IDENTIFICATION BY MASS SPECTROMETRY [LARGE SCALE ANALYSIS]</scope>
</reference>
<comment type="function">
    <text>Negatively regulates T-cell antigen receptor (TCR)-mediated signaling. Involved in positive selection of T-cells.</text>
</comment>
<comment type="subunit">
    <text evidence="1">Homodimer; disulfide-linked. When phosphorylated, interacts with PTPN11/SHP2, GRB2 and CSK (By similarity).</text>
</comment>
<comment type="subcellular location">
    <subcellularLocation>
        <location evidence="1">Cell membrane</location>
        <topology evidence="1">Single-pass type III membrane protein</topology>
    </subcellularLocation>
</comment>
<comment type="tissue specificity">
    <text evidence="5">Lymph node, spleen and thymus.</text>
</comment>
<comment type="PTM">
    <text evidence="1">Phosphorylated on tyrosines upon TCR activation; which promotes recruitment of PTPN11, GRB2 and CSK.</text>
</comment>
<gene>
    <name type="primary">Sit1</name>
    <name type="synonym">Sit</name>
</gene>
<sequence>MSRENNCTTADLAWGIPSITQAWGLWALFGVVTMLLLISLAALLSQWTRGRRRTQEEQGPPSGRSVEEVPLYGNLHYLQTGRLSEESRSEEQDPSSGGLARGAEEATCYTSLQLRPAQGRIPSSGTPIKYCEVVLDSEPKPQASGPEPELYASVCAQTRRARASFPDQAYANSQPAPS</sequence>
<organism>
    <name type="scientific">Rattus norvegicus</name>
    <name type="common">Rat</name>
    <dbReference type="NCBI Taxonomy" id="10116"/>
    <lineage>
        <taxon>Eukaryota</taxon>
        <taxon>Metazoa</taxon>
        <taxon>Chordata</taxon>
        <taxon>Craniata</taxon>
        <taxon>Vertebrata</taxon>
        <taxon>Euteleostomi</taxon>
        <taxon>Mammalia</taxon>
        <taxon>Eutheria</taxon>
        <taxon>Euarchontoglires</taxon>
        <taxon>Glires</taxon>
        <taxon>Rodentia</taxon>
        <taxon>Myomorpha</taxon>
        <taxon>Muroidea</taxon>
        <taxon>Muridae</taxon>
        <taxon>Murinae</taxon>
        <taxon>Rattus</taxon>
    </lineage>
</organism>
<feature type="chain" id="PRO_0000083342" description="Signaling threshold-regulating transmembrane adapter 1">
    <location>
        <begin position="1"/>
        <end position="178"/>
    </location>
</feature>
<feature type="topological domain" description="Extracellular" evidence="3">
    <location>
        <begin position="1"/>
        <end position="23"/>
    </location>
</feature>
<feature type="transmembrane region" description="Helical; Signal-anchor for type III membrane protein" evidence="3">
    <location>
        <begin position="24"/>
        <end position="44"/>
    </location>
</feature>
<feature type="topological domain" description="Cytoplasmic" evidence="3">
    <location>
        <begin position="45"/>
        <end position="178"/>
    </location>
</feature>
<feature type="region of interest" description="Interaction with GRB2" evidence="1">
    <location>
        <begin position="72"/>
        <end position="75"/>
    </location>
</feature>
<feature type="region of interest" description="Disordered" evidence="4">
    <location>
        <begin position="81"/>
        <end position="102"/>
    </location>
</feature>
<feature type="region of interest" description="Interaction with PTPN11" evidence="1">
    <location>
        <begin position="128"/>
        <end position="133"/>
    </location>
</feature>
<feature type="region of interest" description="Interaction with CSK" evidence="1">
    <location>
        <begin position="151"/>
        <end position="154"/>
    </location>
</feature>
<feature type="region of interest" description="Interaction with GRB2" evidence="1">
    <location>
        <begin position="170"/>
        <end position="173"/>
    </location>
</feature>
<feature type="modified residue" description="Phosphoserine" evidence="2">
    <location>
        <position position="62"/>
    </location>
</feature>
<feature type="modified residue" description="Phosphoserine" evidence="6">
    <location>
        <position position="65"/>
    </location>
</feature>
<feature type="modified residue" description="Phosphotyrosine" evidence="2">
    <location>
        <position position="72"/>
    </location>
</feature>
<feature type="modified residue" description="Phosphoserine" evidence="2">
    <location>
        <position position="84"/>
    </location>
</feature>
<feature type="modified residue" description="Phosphoserine" evidence="6">
    <location>
        <position position="87"/>
    </location>
</feature>
<feature type="modified residue" description="Phosphoserine" evidence="6">
    <location>
        <position position="89"/>
    </location>
</feature>
<feature type="modified residue" description="Phosphotyrosine" evidence="2">
    <location>
        <position position="109"/>
    </location>
</feature>
<feature type="modified residue" description="Phosphothreonine" evidence="2">
    <location>
        <position position="126"/>
    </location>
</feature>
<feature type="modified residue" description="Phosphotyrosine" evidence="2">
    <location>
        <position position="130"/>
    </location>
</feature>
<feature type="modified residue" description="Phosphotyrosine" evidence="2">
    <location>
        <position position="151"/>
    </location>
</feature>
<feature type="modified residue" description="Phosphoserine" evidence="6">
    <location>
        <position position="164"/>
    </location>
</feature>
<feature type="modified residue" description="Phosphotyrosine" evidence="2">
    <location>
        <position position="170"/>
    </location>
</feature>
<feature type="glycosylation site" description="N-linked (GlcNAc...) asparagine" evidence="3">
    <location>
        <position position="6"/>
    </location>
</feature>
<feature type="disulfide bond" description="Interchain" evidence="1">
    <location>
        <position position="7"/>
    </location>
</feature>
<accession>Q5M869</accession>
<evidence type="ECO:0000250" key="1"/>
<evidence type="ECO:0000250" key="2">
    <source>
        <dbReference type="UniProtKB" id="Q9Y3P8"/>
    </source>
</evidence>
<evidence type="ECO:0000255" key="3"/>
<evidence type="ECO:0000256" key="4">
    <source>
        <dbReference type="SAM" id="MobiDB-lite"/>
    </source>
</evidence>
<evidence type="ECO:0000269" key="5">
    <source>
    </source>
</evidence>
<evidence type="ECO:0007744" key="6">
    <source>
    </source>
</evidence>
<dbReference type="EMBL" id="BC088199">
    <property type="protein sequence ID" value="AAH88199.1"/>
    <property type="molecule type" value="mRNA"/>
</dbReference>
<dbReference type="RefSeq" id="NP_001019515.1">
    <property type="nucleotide sequence ID" value="NM_001024344.1"/>
</dbReference>
<dbReference type="FunCoup" id="Q5M869">
    <property type="interactions" value="122"/>
</dbReference>
<dbReference type="STRING" id="10116.ENSRNOP00000036171"/>
<dbReference type="GlyCosmos" id="Q5M869">
    <property type="glycosylation" value="1 site, No reported glycans"/>
</dbReference>
<dbReference type="GlyGen" id="Q5M869">
    <property type="glycosylation" value="1 site"/>
</dbReference>
<dbReference type="iPTMnet" id="Q5M869"/>
<dbReference type="PhosphoSitePlus" id="Q5M869"/>
<dbReference type="PaxDb" id="10116-ENSRNOP00000036171"/>
<dbReference type="Ensembl" id="ENSRNOT00000035040.6">
    <property type="protein sequence ID" value="ENSRNOP00000036171.4"/>
    <property type="gene ID" value="ENSRNOG00000021546.6"/>
</dbReference>
<dbReference type="GeneID" id="500449"/>
<dbReference type="KEGG" id="rno:500449"/>
<dbReference type="UCSC" id="RGD:1559919">
    <property type="organism name" value="rat"/>
</dbReference>
<dbReference type="AGR" id="RGD:1559919"/>
<dbReference type="CTD" id="27240"/>
<dbReference type="RGD" id="1559919">
    <property type="gene designation" value="Sit1"/>
</dbReference>
<dbReference type="eggNOG" id="ENOG502S87Q">
    <property type="taxonomic scope" value="Eukaryota"/>
</dbReference>
<dbReference type="GeneTree" id="ENSGT00390000016476"/>
<dbReference type="HOGENOM" id="CLU_111407_0_0_1"/>
<dbReference type="InParanoid" id="Q5M869"/>
<dbReference type="OMA" id="WTRGRSK"/>
<dbReference type="OrthoDB" id="9414978at2759"/>
<dbReference type="PhylomeDB" id="Q5M869"/>
<dbReference type="TreeFam" id="TF337816"/>
<dbReference type="PRO" id="PR:Q5M869"/>
<dbReference type="Proteomes" id="UP000002494">
    <property type="component" value="Chromosome 5"/>
</dbReference>
<dbReference type="Bgee" id="ENSRNOG00000021546">
    <property type="expression patterns" value="Expressed in thymus and 10 other cell types or tissues"/>
</dbReference>
<dbReference type="GO" id="GO:0005886">
    <property type="term" value="C:plasma membrane"/>
    <property type="evidence" value="ECO:0000266"/>
    <property type="project" value="RGD"/>
</dbReference>
<dbReference type="GO" id="GO:0019900">
    <property type="term" value="F:kinase binding"/>
    <property type="evidence" value="ECO:0000266"/>
    <property type="project" value="RGD"/>
</dbReference>
<dbReference type="GO" id="GO:0002250">
    <property type="term" value="P:adaptive immune response"/>
    <property type="evidence" value="ECO:0007669"/>
    <property type="project" value="UniProtKB-KW"/>
</dbReference>
<dbReference type="GO" id="GO:0050863">
    <property type="term" value="P:regulation of T cell activation"/>
    <property type="evidence" value="ECO:0000266"/>
    <property type="project" value="RGD"/>
</dbReference>
<dbReference type="GO" id="GO:0007165">
    <property type="term" value="P:signal transduction"/>
    <property type="evidence" value="ECO:0007669"/>
    <property type="project" value="InterPro"/>
</dbReference>
<dbReference type="GO" id="GO:0043029">
    <property type="term" value="P:T cell homeostasis"/>
    <property type="evidence" value="ECO:0007669"/>
    <property type="project" value="InterPro"/>
</dbReference>
<dbReference type="InterPro" id="IPR033269">
    <property type="entry name" value="Sit1"/>
</dbReference>
<dbReference type="PANTHER" id="PTHR15604">
    <property type="entry name" value="SIGNALING THRESHOLD-REGULATING TRANSMEMBRANE ADAPTER 1"/>
    <property type="match status" value="1"/>
</dbReference>
<dbReference type="PANTHER" id="PTHR15604:SF0">
    <property type="entry name" value="SIGNALING THRESHOLD-REGULATING TRANSMEMBRANE ADAPTER 1"/>
    <property type="match status" value="1"/>
</dbReference>
<proteinExistence type="evidence at protein level"/>
<protein>
    <recommendedName>
        <fullName>Signaling threshold-regulating transmembrane adapter 1</fullName>
    </recommendedName>
    <alternativeName>
        <fullName>SHP2-interacting transmembrane adapter protein</fullName>
    </alternativeName>
    <alternativeName>
        <fullName>Suppression-inducing transmembrane adapter 1</fullName>
    </alternativeName>
</protein>
<name>SIT1_RAT</name>